<protein>
    <recommendedName>
        <fullName evidence="1">Elongation factor P</fullName>
        <shortName evidence="1">EF-P</shortName>
    </recommendedName>
</protein>
<comment type="function">
    <text evidence="1">Involved in peptide bond synthesis. Stimulates efficient translation and peptide-bond synthesis on native or reconstituted 70S ribosomes in vitro. Probably functions indirectly by altering the affinity of the ribosome for aminoacyl-tRNA, thus increasing their reactivity as acceptors for peptidyl transferase.</text>
</comment>
<comment type="pathway">
    <text evidence="1">Protein biosynthesis; polypeptide chain elongation.</text>
</comment>
<comment type="subcellular location">
    <subcellularLocation>
        <location evidence="1">Cytoplasm</location>
    </subcellularLocation>
</comment>
<comment type="similarity">
    <text evidence="1">Belongs to the elongation factor P family.</text>
</comment>
<sequence>MISVNDFRTGLTITVDNDLWQVIEFQHVKPGKGAAFVRSKLRNLRTGAIQEKTFRAGEKVEKAHIENRRMQYLYASGEAHVFMDNGTYEQIELSEAQIERELKFLKENMEVSIMTYQGEVLGVELPNTVELKVVETEPGIKGDTASNVTKPATLETGLVVQVPIFINEGEMLVINTAEGKYVSRA</sequence>
<reference key="1">
    <citation type="journal article" date="2008" name="Chem. Biol. Interact.">
        <title>Extending the Bacillus cereus group genomics to putative food-borne pathogens of different toxicity.</title>
        <authorList>
            <person name="Lapidus A."/>
            <person name="Goltsman E."/>
            <person name="Auger S."/>
            <person name="Galleron N."/>
            <person name="Segurens B."/>
            <person name="Dossat C."/>
            <person name="Land M.L."/>
            <person name="Broussolle V."/>
            <person name="Brillard J."/>
            <person name="Guinebretiere M.-H."/>
            <person name="Sanchis V."/>
            <person name="Nguen-the C."/>
            <person name="Lereclus D."/>
            <person name="Richardson P."/>
            <person name="Wincker P."/>
            <person name="Weissenbach J."/>
            <person name="Ehrlich S.D."/>
            <person name="Sorokin A."/>
        </authorList>
    </citation>
    <scope>NUCLEOTIDE SEQUENCE [LARGE SCALE GENOMIC DNA]</scope>
    <source>
        <strain>DSM 22905 / CIP 110041 / 391-98 / NVH 391-98</strain>
    </source>
</reference>
<name>EFP_BACCN</name>
<gene>
    <name evidence="1" type="primary">efp</name>
    <name type="ordered locus">Bcer98_2891</name>
</gene>
<proteinExistence type="inferred from homology"/>
<evidence type="ECO:0000255" key="1">
    <source>
        <dbReference type="HAMAP-Rule" id="MF_00141"/>
    </source>
</evidence>
<keyword id="KW-0963">Cytoplasm</keyword>
<keyword id="KW-0251">Elongation factor</keyword>
<keyword id="KW-0648">Protein biosynthesis</keyword>
<dbReference type="EMBL" id="CP000764">
    <property type="protein sequence ID" value="ABS23123.1"/>
    <property type="molecule type" value="Genomic_DNA"/>
</dbReference>
<dbReference type="RefSeq" id="WP_012095350.1">
    <property type="nucleotide sequence ID" value="NC_009674.1"/>
</dbReference>
<dbReference type="SMR" id="A7GSL5"/>
<dbReference type="STRING" id="315749.Bcer98_2891"/>
<dbReference type="GeneID" id="33898144"/>
<dbReference type="KEGG" id="bcy:Bcer98_2891"/>
<dbReference type="eggNOG" id="COG0231">
    <property type="taxonomic scope" value="Bacteria"/>
</dbReference>
<dbReference type="HOGENOM" id="CLU_074944_0_1_9"/>
<dbReference type="OrthoDB" id="9801844at2"/>
<dbReference type="UniPathway" id="UPA00345"/>
<dbReference type="Proteomes" id="UP000002300">
    <property type="component" value="Chromosome"/>
</dbReference>
<dbReference type="GO" id="GO:0005737">
    <property type="term" value="C:cytoplasm"/>
    <property type="evidence" value="ECO:0007669"/>
    <property type="project" value="UniProtKB-SubCell"/>
</dbReference>
<dbReference type="GO" id="GO:0003746">
    <property type="term" value="F:translation elongation factor activity"/>
    <property type="evidence" value="ECO:0007669"/>
    <property type="project" value="UniProtKB-UniRule"/>
</dbReference>
<dbReference type="GO" id="GO:0043043">
    <property type="term" value="P:peptide biosynthetic process"/>
    <property type="evidence" value="ECO:0007669"/>
    <property type="project" value="InterPro"/>
</dbReference>
<dbReference type="CDD" id="cd04470">
    <property type="entry name" value="S1_EF-P_repeat_1"/>
    <property type="match status" value="1"/>
</dbReference>
<dbReference type="CDD" id="cd05794">
    <property type="entry name" value="S1_EF-P_repeat_2"/>
    <property type="match status" value="1"/>
</dbReference>
<dbReference type="FunFam" id="2.30.30.30:FF:000010">
    <property type="entry name" value="Elongation factor P"/>
    <property type="match status" value="1"/>
</dbReference>
<dbReference type="FunFam" id="2.40.50.140:FF:000004">
    <property type="entry name" value="Elongation factor P"/>
    <property type="match status" value="1"/>
</dbReference>
<dbReference type="FunFam" id="2.40.50.140:FF:000009">
    <property type="entry name" value="Elongation factor P"/>
    <property type="match status" value="1"/>
</dbReference>
<dbReference type="Gene3D" id="2.30.30.30">
    <property type="match status" value="1"/>
</dbReference>
<dbReference type="Gene3D" id="2.40.50.140">
    <property type="entry name" value="Nucleic acid-binding proteins"/>
    <property type="match status" value="2"/>
</dbReference>
<dbReference type="HAMAP" id="MF_00141">
    <property type="entry name" value="EF_P"/>
    <property type="match status" value="1"/>
</dbReference>
<dbReference type="InterPro" id="IPR015365">
    <property type="entry name" value="Elong-fact-P_C"/>
</dbReference>
<dbReference type="InterPro" id="IPR012340">
    <property type="entry name" value="NA-bd_OB-fold"/>
</dbReference>
<dbReference type="InterPro" id="IPR014722">
    <property type="entry name" value="Rib_uL2_dom2"/>
</dbReference>
<dbReference type="InterPro" id="IPR020599">
    <property type="entry name" value="Transl_elong_fac_P/YeiP"/>
</dbReference>
<dbReference type="InterPro" id="IPR013185">
    <property type="entry name" value="Transl_elong_KOW-like"/>
</dbReference>
<dbReference type="InterPro" id="IPR001059">
    <property type="entry name" value="Transl_elong_P/YeiP_cen"/>
</dbReference>
<dbReference type="InterPro" id="IPR013852">
    <property type="entry name" value="Transl_elong_P/YeiP_CS"/>
</dbReference>
<dbReference type="InterPro" id="IPR011768">
    <property type="entry name" value="Transl_elongation_fac_P"/>
</dbReference>
<dbReference type="InterPro" id="IPR008991">
    <property type="entry name" value="Translation_prot_SH3-like_sf"/>
</dbReference>
<dbReference type="NCBIfam" id="TIGR00038">
    <property type="entry name" value="efp"/>
    <property type="match status" value="1"/>
</dbReference>
<dbReference type="NCBIfam" id="NF001810">
    <property type="entry name" value="PRK00529.1"/>
    <property type="match status" value="1"/>
</dbReference>
<dbReference type="PANTHER" id="PTHR30053">
    <property type="entry name" value="ELONGATION FACTOR P"/>
    <property type="match status" value="1"/>
</dbReference>
<dbReference type="PANTHER" id="PTHR30053:SF12">
    <property type="entry name" value="ELONGATION FACTOR P (EF-P) FAMILY PROTEIN"/>
    <property type="match status" value="1"/>
</dbReference>
<dbReference type="Pfam" id="PF01132">
    <property type="entry name" value="EFP"/>
    <property type="match status" value="1"/>
</dbReference>
<dbReference type="Pfam" id="PF08207">
    <property type="entry name" value="EFP_N"/>
    <property type="match status" value="1"/>
</dbReference>
<dbReference type="Pfam" id="PF09285">
    <property type="entry name" value="Elong-fact-P_C"/>
    <property type="match status" value="1"/>
</dbReference>
<dbReference type="PIRSF" id="PIRSF005901">
    <property type="entry name" value="EF-P"/>
    <property type="match status" value="1"/>
</dbReference>
<dbReference type="SMART" id="SM01185">
    <property type="entry name" value="EFP"/>
    <property type="match status" value="1"/>
</dbReference>
<dbReference type="SMART" id="SM00841">
    <property type="entry name" value="Elong-fact-P_C"/>
    <property type="match status" value="1"/>
</dbReference>
<dbReference type="SUPFAM" id="SSF50249">
    <property type="entry name" value="Nucleic acid-binding proteins"/>
    <property type="match status" value="2"/>
</dbReference>
<dbReference type="SUPFAM" id="SSF50104">
    <property type="entry name" value="Translation proteins SH3-like domain"/>
    <property type="match status" value="1"/>
</dbReference>
<dbReference type="PROSITE" id="PS01275">
    <property type="entry name" value="EFP"/>
    <property type="match status" value="1"/>
</dbReference>
<accession>A7GSL5</accession>
<organism>
    <name type="scientific">Bacillus cytotoxicus (strain DSM 22905 / CIP 110041 / 391-98 / NVH 391-98)</name>
    <dbReference type="NCBI Taxonomy" id="315749"/>
    <lineage>
        <taxon>Bacteria</taxon>
        <taxon>Bacillati</taxon>
        <taxon>Bacillota</taxon>
        <taxon>Bacilli</taxon>
        <taxon>Bacillales</taxon>
        <taxon>Bacillaceae</taxon>
        <taxon>Bacillus</taxon>
        <taxon>Bacillus cereus group</taxon>
    </lineage>
</organism>
<feature type="chain" id="PRO_1000076502" description="Elongation factor P">
    <location>
        <begin position="1"/>
        <end position="185"/>
    </location>
</feature>